<proteinExistence type="inferred from homology"/>
<reference key="1">
    <citation type="journal article" date="2007" name="PLoS ONE">
        <title>Molecular correlates of host specialization in Staphylococcus aureus.</title>
        <authorList>
            <person name="Herron-Olson L."/>
            <person name="Fitzgerald J.R."/>
            <person name="Musser J.M."/>
            <person name="Kapur V."/>
        </authorList>
    </citation>
    <scope>NUCLEOTIDE SEQUENCE [LARGE SCALE GENOMIC DNA]</scope>
    <source>
        <strain>bovine RF122 / ET3-1</strain>
    </source>
</reference>
<protein>
    <recommendedName>
        <fullName evidence="1">ATP-dependent protease ATPase subunit HslU</fullName>
    </recommendedName>
    <alternativeName>
        <fullName evidence="1">Unfoldase HslU</fullName>
    </alternativeName>
</protein>
<comment type="function">
    <text evidence="1">ATPase subunit of a proteasome-like degradation complex; this subunit has chaperone activity. The binding of ATP and its subsequent hydrolysis by HslU are essential for unfolding of protein substrates subsequently hydrolyzed by HslV. HslU recognizes the N-terminal part of its protein substrates and unfolds these before they are guided to HslV for hydrolysis.</text>
</comment>
<comment type="subunit">
    <text evidence="1">A double ring-shaped homohexamer of HslV is capped on each side by a ring-shaped HslU homohexamer. The assembly of the HslU/HslV complex is dependent on binding of ATP.</text>
</comment>
<comment type="subcellular location">
    <subcellularLocation>
        <location evidence="1">Cytoplasm</location>
    </subcellularLocation>
</comment>
<comment type="similarity">
    <text evidence="1">Belongs to the ClpX chaperone family. HslU subfamily.</text>
</comment>
<dbReference type="EMBL" id="AJ938182">
    <property type="protein sequence ID" value="CAI80805.1"/>
    <property type="molecule type" value="Genomic_DNA"/>
</dbReference>
<dbReference type="RefSeq" id="WP_000379056.1">
    <property type="nucleotide sequence ID" value="NC_007622.1"/>
</dbReference>
<dbReference type="SMR" id="Q2YXL4"/>
<dbReference type="KEGG" id="sab:SAB1116"/>
<dbReference type="HOGENOM" id="CLU_033123_0_0_9"/>
<dbReference type="GO" id="GO:0009376">
    <property type="term" value="C:HslUV protease complex"/>
    <property type="evidence" value="ECO:0007669"/>
    <property type="project" value="UniProtKB-UniRule"/>
</dbReference>
<dbReference type="GO" id="GO:0005524">
    <property type="term" value="F:ATP binding"/>
    <property type="evidence" value="ECO:0007669"/>
    <property type="project" value="UniProtKB-UniRule"/>
</dbReference>
<dbReference type="GO" id="GO:0016887">
    <property type="term" value="F:ATP hydrolysis activity"/>
    <property type="evidence" value="ECO:0007669"/>
    <property type="project" value="InterPro"/>
</dbReference>
<dbReference type="GO" id="GO:0008233">
    <property type="term" value="F:peptidase activity"/>
    <property type="evidence" value="ECO:0007669"/>
    <property type="project" value="InterPro"/>
</dbReference>
<dbReference type="GO" id="GO:0036402">
    <property type="term" value="F:proteasome-activating activity"/>
    <property type="evidence" value="ECO:0007669"/>
    <property type="project" value="UniProtKB-UniRule"/>
</dbReference>
<dbReference type="GO" id="GO:0043335">
    <property type="term" value="P:protein unfolding"/>
    <property type="evidence" value="ECO:0007669"/>
    <property type="project" value="UniProtKB-UniRule"/>
</dbReference>
<dbReference type="GO" id="GO:0051603">
    <property type="term" value="P:proteolysis involved in protein catabolic process"/>
    <property type="evidence" value="ECO:0007669"/>
    <property type="project" value="TreeGrafter"/>
</dbReference>
<dbReference type="CDD" id="cd19498">
    <property type="entry name" value="RecA-like_HslU"/>
    <property type="match status" value="1"/>
</dbReference>
<dbReference type="FunFam" id="3.40.50.300:FF:000220">
    <property type="entry name" value="ATP-dependent protease ATPase subunit HslU"/>
    <property type="match status" value="1"/>
</dbReference>
<dbReference type="Gene3D" id="1.10.8.60">
    <property type="match status" value="1"/>
</dbReference>
<dbReference type="Gene3D" id="3.40.50.300">
    <property type="entry name" value="P-loop containing nucleotide triphosphate hydrolases"/>
    <property type="match status" value="2"/>
</dbReference>
<dbReference type="HAMAP" id="MF_00249">
    <property type="entry name" value="HslU"/>
    <property type="match status" value="1"/>
</dbReference>
<dbReference type="InterPro" id="IPR003593">
    <property type="entry name" value="AAA+_ATPase"/>
</dbReference>
<dbReference type="InterPro" id="IPR050052">
    <property type="entry name" value="ATP-dep_Clp_protease_ClpX"/>
</dbReference>
<dbReference type="InterPro" id="IPR003959">
    <property type="entry name" value="ATPase_AAA_core"/>
</dbReference>
<dbReference type="InterPro" id="IPR019489">
    <property type="entry name" value="Clp_ATPase_C"/>
</dbReference>
<dbReference type="InterPro" id="IPR004491">
    <property type="entry name" value="HslU"/>
</dbReference>
<dbReference type="InterPro" id="IPR027417">
    <property type="entry name" value="P-loop_NTPase"/>
</dbReference>
<dbReference type="NCBIfam" id="TIGR00390">
    <property type="entry name" value="hslU"/>
    <property type="match status" value="1"/>
</dbReference>
<dbReference type="NCBIfam" id="NF003544">
    <property type="entry name" value="PRK05201.1"/>
    <property type="match status" value="1"/>
</dbReference>
<dbReference type="PANTHER" id="PTHR48102">
    <property type="entry name" value="ATP-DEPENDENT CLP PROTEASE ATP-BINDING SUBUNIT CLPX-LIKE, MITOCHONDRIAL-RELATED"/>
    <property type="match status" value="1"/>
</dbReference>
<dbReference type="PANTHER" id="PTHR48102:SF3">
    <property type="entry name" value="ATP-DEPENDENT PROTEASE ATPASE SUBUNIT HSLU"/>
    <property type="match status" value="1"/>
</dbReference>
<dbReference type="Pfam" id="PF00004">
    <property type="entry name" value="AAA"/>
    <property type="match status" value="1"/>
</dbReference>
<dbReference type="Pfam" id="PF07724">
    <property type="entry name" value="AAA_2"/>
    <property type="match status" value="1"/>
</dbReference>
<dbReference type="Pfam" id="PF10431">
    <property type="entry name" value="ClpB_D2-small"/>
    <property type="match status" value="1"/>
</dbReference>
<dbReference type="SMART" id="SM00382">
    <property type="entry name" value="AAA"/>
    <property type="match status" value="1"/>
</dbReference>
<dbReference type="SMART" id="SM01086">
    <property type="entry name" value="ClpB_D2-small"/>
    <property type="match status" value="1"/>
</dbReference>
<dbReference type="SUPFAM" id="SSF52540">
    <property type="entry name" value="P-loop containing nucleoside triphosphate hydrolases"/>
    <property type="match status" value="1"/>
</dbReference>
<feature type="chain" id="PRO_1000012820" description="ATP-dependent protease ATPase subunit HslU">
    <location>
        <begin position="1"/>
        <end position="467"/>
    </location>
</feature>
<feature type="region of interest" description="Disordered" evidence="2">
    <location>
        <begin position="149"/>
        <end position="192"/>
    </location>
</feature>
<feature type="compositionally biased region" description="Basic and acidic residues" evidence="2">
    <location>
        <begin position="178"/>
        <end position="192"/>
    </location>
</feature>
<feature type="binding site" evidence="1">
    <location>
        <position position="22"/>
    </location>
    <ligand>
        <name>ATP</name>
        <dbReference type="ChEBI" id="CHEBI:30616"/>
    </ligand>
</feature>
<feature type="binding site" evidence="1">
    <location>
        <begin position="64"/>
        <end position="69"/>
    </location>
    <ligand>
        <name>ATP</name>
        <dbReference type="ChEBI" id="CHEBI:30616"/>
    </ligand>
</feature>
<feature type="binding site" evidence="1">
    <location>
        <position position="280"/>
    </location>
    <ligand>
        <name>ATP</name>
        <dbReference type="ChEBI" id="CHEBI:30616"/>
    </ligand>
</feature>
<feature type="binding site" evidence="1">
    <location>
        <position position="345"/>
    </location>
    <ligand>
        <name>ATP</name>
        <dbReference type="ChEBI" id="CHEBI:30616"/>
    </ligand>
</feature>
<feature type="binding site" evidence="1">
    <location>
        <position position="417"/>
    </location>
    <ligand>
        <name>ATP</name>
        <dbReference type="ChEBI" id="CHEBI:30616"/>
    </ligand>
</feature>
<organism>
    <name type="scientific">Staphylococcus aureus (strain bovine RF122 / ET3-1)</name>
    <dbReference type="NCBI Taxonomy" id="273036"/>
    <lineage>
        <taxon>Bacteria</taxon>
        <taxon>Bacillati</taxon>
        <taxon>Bacillota</taxon>
        <taxon>Bacilli</taxon>
        <taxon>Bacillales</taxon>
        <taxon>Staphylococcaceae</taxon>
        <taxon>Staphylococcus</taxon>
    </lineage>
</organism>
<accession>Q2YXL4</accession>
<gene>
    <name evidence="1" type="primary">hslU</name>
    <name type="ordered locus">SAB1116</name>
</gene>
<sequence length="467" mass="52315">MDTAGIRLTPKEIVSKLNEYIVGQNDAKRKVAIALRNRYRRSLLDEESKQEISPKNILMIGPTGVGKTEIARRMAKVVGAPFIKVEATKFTEVGYVGRDVESMVRDLVDVSVRLVKAQKKSLVQDEATAKANEKLVKLLVPSMKKKASQTNNPLESLFGGAIPNFGQNNEDEEEPPTEEIKTKRSEIKRQLEEGKLEKEKVRIKVEQDPGALGMLGTNQNQQMQEMMNQLMPKKKVEREVAVETARKILADSYADELIDQESANQEALELAEQMGIIFIDEIDKVATNNHNSGQDVSRQGVQRDILPILEGSVIQTKYGTVNTEHMLFIGAGAFHVSKPSDLIPELQGRFPLRVELDSLSVEDFVRILTEPKLSLIKQYEALLQTEEVTVNFTDEAITRLAEIAYQVNQDTDNIGARRLHTILEKMLEDLSFEAPSMPNAVVDITPQYVDDKLKSISTNKDLSAFIL</sequence>
<keyword id="KW-0067">ATP-binding</keyword>
<keyword id="KW-0143">Chaperone</keyword>
<keyword id="KW-0963">Cytoplasm</keyword>
<keyword id="KW-0547">Nucleotide-binding</keyword>
<keyword id="KW-0346">Stress response</keyword>
<name>HSLU_STAAB</name>
<evidence type="ECO:0000255" key="1">
    <source>
        <dbReference type="HAMAP-Rule" id="MF_00249"/>
    </source>
</evidence>
<evidence type="ECO:0000256" key="2">
    <source>
        <dbReference type="SAM" id="MobiDB-lite"/>
    </source>
</evidence>